<proteinExistence type="evidence at protein level"/>
<name>SCAT_OLIMR</name>
<accession>Q9UAC8</accession>
<organism>
    <name type="scientific">Olivierus martensii</name>
    <name type="common">Manchurian scorpion</name>
    <name type="synonym">Mesobuthus martensii</name>
    <dbReference type="NCBI Taxonomy" id="34649"/>
    <lineage>
        <taxon>Eukaryota</taxon>
        <taxon>Metazoa</taxon>
        <taxon>Ecdysozoa</taxon>
        <taxon>Arthropoda</taxon>
        <taxon>Chelicerata</taxon>
        <taxon>Arachnida</taxon>
        <taxon>Scorpiones</taxon>
        <taxon>Buthida</taxon>
        <taxon>Buthoidea</taxon>
        <taxon>Buthidae</taxon>
        <taxon>Olivierus</taxon>
    </lineage>
</organism>
<feature type="signal peptide" evidence="2 3">
    <location>
        <begin position="1"/>
        <end position="19"/>
    </location>
</feature>
<feature type="chain" id="PRO_0000035263" description="Beta-toxin BmKAs1">
    <location>
        <begin position="20"/>
        <end position="85"/>
    </location>
</feature>
<feature type="domain" description="LCN-type CS-alpha/beta" evidence="1">
    <location>
        <begin position="20"/>
        <end position="82"/>
    </location>
</feature>
<feature type="disulfide bond" evidence="1 2">
    <location>
        <begin position="31"/>
        <end position="81"/>
    </location>
</feature>
<feature type="disulfide bond" evidence="1 2">
    <location>
        <begin position="35"/>
        <end position="56"/>
    </location>
</feature>
<feature type="disulfide bond" evidence="1 2">
    <location>
        <begin position="42"/>
        <end position="63"/>
    </location>
</feature>
<feature type="disulfide bond" evidence="1 2">
    <location>
        <begin position="46"/>
        <end position="65"/>
    </location>
</feature>
<keyword id="KW-0903">Direct protein sequencing</keyword>
<keyword id="KW-1015">Disulfide bond</keyword>
<keyword id="KW-0872">Ion channel impairing toxin</keyword>
<keyword id="KW-0528">Neurotoxin</keyword>
<keyword id="KW-0632">Potassium channel impairing toxin</keyword>
<keyword id="KW-0964">Secreted</keyword>
<keyword id="KW-0732">Signal</keyword>
<keyword id="KW-0800">Toxin</keyword>
<keyword id="KW-0738">Voltage-gated sodium channel impairing toxin</keyword>
<protein>
    <recommendedName>
        <fullName>Beta-toxin BmKAs1</fullName>
        <shortName>BmK AS-1</shortName>
    </recommendedName>
    <alternativeName>
        <fullName>BmK activator of skeletal-muscle ryanodine receptor</fullName>
    </alternativeName>
    <alternativeName>
        <fullName>Toxin BmP09</fullName>
    </alternativeName>
</protein>
<comment type="function">
    <text>Beta toxins bind voltage-independently at site-4 of sodium channels (Nav) and shift the voltage of activation toward more negative potentials thereby affecting sodium channel activation and promoting spontaneous and repetitive firing. BmKAs1 also significantly stimulates the binding of [3H]-ryanodine to ryanodine receptors on the sarcoplasmic reticulum of the skeletal muscle. It also displays antinociceptive effect in rat models.</text>
</comment>
<comment type="function">
    <text>Toxin BmP09 (which may be post-translationally modified) specifically and reversibly blocks large conductance calcium-dependent and voltage-dependent potassium channels (BK) but has no effect on sodium channels.</text>
</comment>
<comment type="subcellular location">
    <subcellularLocation>
        <location>Secreted</location>
    </subcellularLocation>
</comment>
<comment type="tissue specificity">
    <text>Expressed by the venom gland.</text>
</comment>
<comment type="domain">
    <text evidence="4">Has the structural arrangement of an alpha-helix connected to antiparallel beta-sheets by disulfide bonds (CS-alpha/beta).</text>
</comment>
<comment type="PTM">
    <text>A possible sulfoxide Met-85 on BmP09 could explain the difference of function between BmK AS-1 and BmP09.</text>
</comment>
<comment type="mass spectrometry">
    <text>Toxin BmP09.</text>
</comment>
<comment type="similarity">
    <text evidence="4">Belongs to the long (4 C-C) scorpion toxin superfamily. Sodium channel inhibitor family.</text>
</comment>
<sequence>MKIIIFLIVCSFVLIGVKADNGYLLNKYTGCKIWCVINNESCNSECKLRRGNYGYCYFWKLACYCEGAPKSELWAYETNKCNGKM</sequence>
<dbReference type="EMBL" id="AF079061">
    <property type="protein sequence ID" value="AAD47375.1"/>
    <property type="molecule type" value="Genomic_DNA"/>
</dbReference>
<dbReference type="SMR" id="Q9UAC8"/>
<dbReference type="GO" id="GO:0005576">
    <property type="term" value="C:extracellular region"/>
    <property type="evidence" value="ECO:0007669"/>
    <property type="project" value="UniProtKB-SubCell"/>
</dbReference>
<dbReference type="GO" id="GO:0015459">
    <property type="term" value="F:potassium channel regulator activity"/>
    <property type="evidence" value="ECO:0007669"/>
    <property type="project" value="UniProtKB-KW"/>
</dbReference>
<dbReference type="GO" id="GO:0019871">
    <property type="term" value="F:sodium channel inhibitor activity"/>
    <property type="evidence" value="ECO:0007669"/>
    <property type="project" value="InterPro"/>
</dbReference>
<dbReference type="GO" id="GO:0090729">
    <property type="term" value="F:toxin activity"/>
    <property type="evidence" value="ECO:0007669"/>
    <property type="project" value="UniProtKB-KW"/>
</dbReference>
<dbReference type="GO" id="GO:0006952">
    <property type="term" value="P:defense response"/>
    <property type="evidence" value="ECO:0007669"/>
    <property type="project" value="InterPro"/>
</dbReference>
<dbReference type="CDD" id="cd23106">
    <property type="entry name" value="neurotoxins_LC_scorpion"/>
    <property type="match status" value="1"/>
</dbReference>
<dbReference type="Gene3D" id="3.30.30.10">
    <property type="entry name" value="Knottin, scorpion toxin-like"/>
    <property type="match status" value="1"/>
</dbReference>
<dbReference type="InterPro" id="IPR044062">
    <property type="entry name" value="LCN-type_CS_alpha_beta_dom"/>
</dbReference>
<dbReference type="InterPro" id="IPR003614">
    <property type="entry name" value="Scorpion_toxin-like"/>
</dbReference>
<dbReference type="InterPro" id="IPR036574">
    <property type="entry name" value="Scorpion_toxin-like_sf"/>
</dbReference>
<dbReference type="InterPro" id="IPR018218">
    <property type="entry name" value="Scorpion_toxinL"/>
</dbReference>
<dbReference type="InterPro" id="IPR002061">
    <property type="entry name" value="Scorpion_toxinL/defensin"/>
</dbReference>
<dbReference type="Pfam" id="PF00537">
    <property type="entry name" value="Toxin_3"/>
    <property type="match status" value="1"/>
</dbReference>
<dbReference type="PRINTS" id="PR00285">
    <property type="entry name" value="SCORPNTOXIN"/>
</dbReference>
<dbReference type="SMART" id="SM00505">
    <property type="entry name" value="Knot1"/>
    <property type="match status" value="1"/>
</dbReference>
<dbReference type="SUPFAM" id="SSF57095">
    <property type="entry name" value="Scorpion toxin-like"/>
    <property type="match status" value="1"/>
</dbReference>
<dbReference type="PROSITE" id="PS51863">
    <property type="entry name" value="LCN_CSAB"/>
    <property type="match status" value="1"/>
</dbReference>
<reference key="1">
    <citation type="journal article" date="1999" name="Toxicon">
        <title>Gene cloning and sequencing of BmK AS and BmK AS-1, two novel neurotoxins from the scorpion Buthus martensi Karsch.</title>
        <authorList>
            <person name="Lan Z.-D."/>
            <person name="Dai L."/>
            <person name="Zhuo X.-L."/>
            <person name="Feng J.-C."/>
            <person name="Xu K."/>
            <person name="Chi C.-W."/>
        </authorList>
    </citation>
    <scope>NUCLEOTIDE SEQUENCE [GENOMIC DNA]</scope>
    <source>
        <tissue>Venom gland</tissue>
    </source>
</reference>
<reference key="2">
    <citation type="journal article" date="1999" name="Toxicon">
        <title>Covalent structures of BmK AS and BmK AS-1, two novel bioactive polypeptides purified from Chinese scorpion Buthus martensi Karsch.</title>
        <authorList>
            <person name="Ji Y.-H."/>
            <person name="Li Y.-J."/>
            <person name="Zhang J.-W."/>
            <person name="Song B.-L."/>
            <person name="Yamaki T."/>
            <person name="Mochizuki T."/>
            <person name="Hoshino M."/>
            <person name="Yanaihara N."/>
        </authorList>
    </citation>
    <scope>PROTEIN SEQUENCE OF 20-85</scope>
    <scope>DISULFIDE BONDS</scope>
    <source>
        <tissue>Venom</tissue>
    </source>
</reference>
<reference key="3">
    <citation type="journal article" date="2005" name="J. Biol. Chem.">
        <title>BmP09, a 'long chain' scorpion peptide blocker of BK channels.</title>
        <authorList>
            <person name="Yao J."/>
            <person name="Chen X."/>
            <person name="Li H."/>
            <person name="Zhou Y."/>
            <person name="Yao L."/>
            <person name="Wu G."/>
            <person name="Chen X."/>
            <person name="Zhang N."/>
            <person name="Zhou Z."/>
            <person name="Xu T."/>
            <person name="Wu H."/>
            <person name="Ding J."/>
        </authorList>
    </citation>
    <scope>PROTEIN SEQUENCE OF 20-85</scope>
    <scope>CHARACTERIZATION</scope>
    <scope>MASS SPECTROMETRY</scope>
    <scope>3D-STRUCTURE MODELING</scope>
    <source>
        <tissue>Venom</tissue>
    </source>
</reference>
<reference key="4">
    <citation type="journal article" date="1999" name="NeuroReport">
        <title>Biosensor binding assay of BmK AS-1, a novel Na+ channel-blocking scorpion ligand on rat brain synaptosomes.</title>
        <authorList>
            <person name="Jia L.-Y."/>
            <person name="Zhang J.-W."/>
            <person name="Ji Y.-H."/>
        </authorList>
    </citation>
    <scope>FUNCTION</scope>
</reference>
<reference key="5">
    <citation type="journal article" date="2000" name="J. Neurosci. Res.">
        <title>BmK AS: new scorpion neurotoxin binds to distinct receptor sites of mammal and insect voltage-gated sodium channels.</title>
        <authorList>
            <person name="Li Y.-J."/>
            <person name="Liu Y."/>
            <person name="Ji Y.-H."/>
        </authorList>
    </citation>
    <scope>FUNCTION</scope>
</reference>
<reference key="6">
    <citation type="journal article" date="2001" name="Chin. Med. J.">
        <title>Modulation of BmKAS-1 and BmK1-3-2 to sodium channel in rat dorsal root ganglion neurons.</title>
        <authorList>
            <person name="Xiao H."/>
            <person name="Mao X."/>
            <person name="Tan Z.-Y."/>
            <person name="Shi Y.-L."/>
            <person name="Zhao Z.-Q."/>
            <person name="Ji Y.-H."/>
        </authorList>
    </citation>
    <scope>FUNCTION</scope>
</reference>
<reference key="7">
    <citation type="journal article" date="2001" name="J. Nat. Toxins">
        <title>Sodium current in NG108-15 cell inhibited by scorpion toxin BmKAS-1 and restored by its specific monoclonal antibodies.</title>
        <authorList>
            <person name="Wu Y."/>
            <person name="Ji Y.-H."/>
            <person name="Shi Y.-L."/>
        </authorList>
    </citation>
    <scope>FUNCTION</scope>
</reference>
<reference key="8">
    <citation type="journal article" date="2001" name="Neurosci. Lett.">
        <title>Buthus martensi Karsch agonist of skeletal-muscle RyR-1, a scorpion active polypeptide: antinociceptive effect on rat peripheral nervous system and spinal cord, and inhibition of voltage-gated Na(+) currents in dorsal root ganglion neurons.</title>
        <authorList>
            <person name="Tan Z.-Y."/>
            <person name="Mao X."/>
            <person name="Xiao H."/>
            <person name="Zhao Z.-Q."/>
            <person name="Ji Y.-H."/>
        </authorList>
    </citation>
    <scope>FUNCTION</scope>
</reference>
<evidence type="ECO:0000255" key="1">
    <source>
        <dbReference type="PROSITE-ProRule" id="PRU01210"/>
    </source>
</evidence>
<evidence type="ECO:0000269" key="2">
    <source>
    </source>
</evidence>
<evidence type="ECO:0000269" key="3">
    <source>
    </source>
</evidence>
<evidence type="ECO:0000305" key="4"/>